<organism>
    <name type="scientific">Cereibacter sphaeroides (strain KD131 / KCTC 12085)</name>
    <name type="common">Rhodobacter sphaeroides</name>
    <dbReference type="NCBI Taxonomy" id="557760"/>
    <lineage>
        <taxon>Bacteria</taxon>
        <taxon>Pseudomonadati</taxon>
        <taxon>Pseudomonadota</taxon>
        <taxon>Alphaproteobacteria</taxon>
        <taxon>Rhodobacterales</taxon>
        <taxon>Paracoccaceae</taxon>
        <taxon>Cereibacter</taxon>
    </lineage>
</organism>
<protein>
    <recommendedName>
        <fullName evidence="1">Glutamyl-tRNA(Gln) amidotransferase subunit A</fullName>
        <shortName evidence="1">Glu-ADT subunit A</shortName>
        <ecNumber evidence="1">6.3.5.7</ecNumber>
    </recommendedName>
</protein>
<dbReference type="EC" id="6.3.5.7" evidence="1"/>
<dbReference type="EMBL" id="CP001150">
    <property type="protein sequence ID" value="ACM00451.1"/>
    <property type="molecule type" value="Genomic_DNA"/>
</dbReference>
<dbReference type="RefSeq" id="WP_012643830.1">
    <property type="nucleotide sequence ID" value="NC_011963.1"/>
</dbReference>
<dbReference type="SMR" id="B9KPF8"/>
<dbReference type="GeneID" id="67446043"/>
<dbReference type="KEGG" id="rsk:RSKD131_0591"/>
<dbReference type="HOGENOM" id="CLU_009600_0_3_5"/>
<dbReference type="GO" id="GO:0030956">
    <property type="term" value="C:glutamyl-tRNA(Gln) amidotransferase complex"/>
    <property type="evidence" value="ECO:0007669"/>
    <property type="project" value="InterPro"/>
</dbReference>
<dbReference type="GO" id="GO:0005524">
    <property type="term" value="F:ATP binding"/>
    <property type="evidence" value="ECO:0007669"/>
    <property type="project" value="UniProtKB-KW"/>
</dbReference>
<dbReference type="GO" id="GO:0050567">
    <property type="term" value="F:glutaminyl-tRNA synthase (glutamine-hydrolyzing) activity"/>
    <property type="evidence" value="ECO:0007669"/>
    <property type="project" value="UniProtKB-UniRule"/>
</dbReference>
<dbReference type="GO" id="GO:0006412">
    <property type="term" value="P:translation"/>
    <property type="evidence" value="ECO:0007669"/>
    <property type="project" value="UniProtKB-UniRule"/>
</dbReference>
<dbReference type="Gene3D" id="3.90.1300.10">
    <property type="entry name" value="Amidase signature (AS) domain"/>
    <property type="match status" value="1"/>
</dbReference>
<dbReference type="HAMAP" id="MF_00120">
    <property type="entry name" value="GatA"/>
    <property type="match status" value="1"/>
</dbReference>
<dbReference type="InterPro" id="IPR000120">
    <property type="entry name" value="Amidase"/>
</dbReference>
<dbReference type="InterPro" id="IPR020556">
    <property type="entry name" value="Amidase_CS"/>
</dbReference>
<dbReference type="InterPro" id="IPR023631">
    <property type="entry name" value="Amidase_dom"/>
</dbReference>
<dbReference type="InterPro" id="IPR036928">
    <property type="entry name" value="AS_sf"/>
</dbReference>
<dbReference type="InterPro" id="IPR004412">
    <property type="entry name" value="GatA"/>
</dbReference>
<dbReference type="NCBIfam" id="TIGR00132">
    <property type="entry name" value="gatA"/>
    <property type="match status" value="1"/>
</dbReference>
<dbReference type="PANTHER" id="PTHR11895:SF151">
    <property type="entry name" value="GLUTAMYL-TRNA(GLN) AMIDOTRANSFERASE SUBUNIT A"/>
    <property type="match status" value="1"/>
</dbReference>
<dbReference type="PANTHER" id="PTHR11895">
    <property type="entry name" value="TRANSAMIDASE"/>
    <property type="match status" value="1"/>
</dbReference>
<dbReference type="Pfam" id="PF01425">
    <property type="entry name" value="Amidase"/>
    <property type="match status" value="1"/>
</dbReference>
<dbReference type="SUPFAM" id="SSF75304">
    <property type="entry name" value="Amidase signature (AS) enzymes"/>
    <property type="match status" value="1"/>
</dbReference>
<dbReference type="PROSITE" id="PS00571">
    <property type="entry name" value="AMIDASES"/>
    <property type="match status" value="1"/>
</dbReference>
<name>GATA_CERSK</name>
<evidence type="ECO:0000255" key="1">
    <source>
        <dbReference type="HAMAP-Rule" id="MF_00120"/>
    </source>
</evidence>
<accession>B9KPF8</accession>
<proteinExistence type="inferred from homology"/>
<keyword id="KW-0067">ATP-binding</keyword>
<keyword id="KW-0436">Ligase</keyword>
<keyword id="KW-0547">Nucleotide-binding</keyword>
<keyword id="KW-0648">Protein biosynthesis</keyword>
<sequence>MNANELTIAEARDALAKGELSAVDLTMACLTAIDAGTPLNAFVHATPEIALDQARAADARRGAEAGALNGIPLGIKDLFCTRGVASQAASNILRGFKPEYESTVTSKLFEAGAVMLGKLNMDEFAMGSSNETSCYGDAVNPWKVDDRRLTPGGSSGGSAAAVAADLCLAATGTDTGGSIRQPAAFTGIVGIKPTYGRVSRWGIVAFASSLDQAGPMTKSVRDAAILLGAMAGHDPKDSTSADIPVPDFEAALTGDIRGRKIGIPREYRMEGMPAEIEALWARGREMLADAGAEIVDISLPHTKYALPAYYVIAPAEASSNLARYDGVRYGHRARLGQGDGIVDMYEKTRAEGFGKEVQRRVMIGTYVLSAGFYDAYYNRARKVRALIKRDFDEAFAAGVDAILTPATPSSAFGLGEMADADPVAMYLNDVFTVTVNLAGLPGISVPVGLDAKGLPLGLQLIGRPWDEAGLLNHAHVLERAAGFVEKPRKWW</sequence>
<reference key="1">
    <citation type="journal article" date="2009" name="J. Bacteriol.">
        <title>Complete genome sequence of Rhodobacter sphaeroides KD131.</title>
        <authorList>
            <person name="Lim S.-K."/>
            <person name="Kim S.J."/>
            <person name="Cha S.H."/>
            <person name="Oh Y.-K."/>
            <person name="Rhee H.-J."/>
            <person name="Kim M.-S."/>
            <person name="Lee J.K."/>
        </authorList>
    </citation>
    <scope>NUCLEOTIDE SEQUENCE [LARGE SCALE GENOMIC DNA]</scope>
    <source>
        <strain>KD131 / KCTC 12085</strain>
    </source>
</reference>
<feature type="chain" id="PRO_1000122488" description="Glutamyl-tRNA(Gln) amidotransferase subunit A">
    <location>
        <begin position="1"/>
        <end position="491"/>
    </location>
</feature>
<feature type="active site" description="Charge relay system" evidence="1">
    <location>
        <position position="76"/>
    </location>
</feature>
<feature type="active site" description="Charge relay system" evidence="1">
    <location>
        <position position="154"/>
    </location>
</feature>
<feature type="active site" description="Acyl-ester intermediate" evidence="1">
    <location>
        <position position="178"/>
    </location>
</feature>
<comment type="function">
    <text evidence="1">Allows the formation of correctly charged Gln-tRNA(Gln) through the transamidation of misacylated Glu-tRNA(Gln) in organisms which lack glutaminyl-tRNA synthetase. The reaction takes place in the presence of glutamine and ATP through an activated gamma-phospho-Glu-tRNA(Gln).</text>
</comment>
<comment type="catalytic activity">
    <reaction evidence="1">
        <text>L-glutamyl-tRNA(Gln) + L-glutamine + ATP + H2O = L-glutaminyl-tRNA(Gln) + L-glutamate + ADP + phosphate + H(+)</text>
        <dbReference type="Rhea" id="RHEA:17521"/>
        <dbReference type="Rhea" id="RHEA-COMP:9681"/>
        <dbReference type="Rhea" id="RHEA-COMP:9684"/>
        <dbReference type="ChEBI" id="CHEBI:15377"/>
        <dbReference type="ChEBI" id="CHEBI:15378"/>
        <dbReference type="ChEBI" id="CHEBI:29985"/>
        <dbReference type="ChEBI" id="CHEBI:30616"/>
        <dbReference type="ChEBI" id="CHEBI:43474"/>
        <dbReference type="ChEBI" id="CHEBI:58359"/>
        <dbReference type="ChEBI" id="CHEBI:78520"/>
        <dbReference type="ChEBI" id="CHEBI:78521"/>
        <dbReference type="ChEBI" id="CHEBI:456216"/>
        <dbReference type="EC" id="6.3.5.7"/>
    </reaction>
</comment>
<comment type="subunit">
    <text evidence="1">Heterotrimer of A, B and C subunits.</text>
</comment>
<comment type="similarity">
    <text evidence="1">Belongs to the amidase family. GatA subfamily.</text>
</comment>
<gene>
    <name evidence="1" type="primary">gatA</name>
    <name type="ordered locus">RSKD131_0591</name>
</gene>